<organism>
    <name type="scientific">Salmonella typhimurium (strain LT2 / SGSC1412 / ATCC 700720)</name>
    <dbReference type="NCBI Taxonomy" id="99287"/>
    <lineage>
        <taxon>Bacteria</taxon>
        <taxon>Pseudomonadati</taxon>
        <taxon>Pseudomonadota</taxon>
        <taxon>Gammaproteobacteria</taxon>
        <taxon>Enterobacterales</taxon>
        <taxon>Enterobacteriaceae</taxon>
        <taxon>Salmonella</taxon>
    </lineage>
</organism>
<sequence>MTLLSGKTTLVLCLSSILCGCTTNGLPTPYSINLSFPVITQNQINSGGYYINDAEQIRTTDGLCLDAGPDQQNRLTLRECKHVQSQLFSFHRDRITQGEKCLDAAGQGTKEGTPIILYSCTGNDNQRWLTDDNKIKGKQSRKCLGTNSIIVRKGDPVVLADCDFSRALEFTIR</sequence>
<proteinExistence type="inferred from homology"/>
<gene>
    <name type="primary">envE</name>
    <name type="ordered locus">STM1242</name>
</gene>
<protein>
    <recommendedName>
        <fullName>Probable lipoprotein EnvE</fullName>
    </recommendedName>
</protein>
<dbReference type="EMBL" id="U31849">
    <property type="protein sequence ID" value="AAA82995.1"/>
    <property type="status" value="ALT_FRAME"/>
    <property type="molecule type" value="Genomic_DNA"/>
</dbReference>
<dbReference type="EMBL" id="AE006468">
    <property type="protein sequence ID" value="AAL20171.1"/>
    <property type="molecule type" value="Genomic_DNA"/>
</dbReference>
<dbReference type="RefSeq" id="NP_460212.1">
    <property type="nucleotide sequence ID" value="NC_003197.2"/>
</dbReference>
<dbReference type="RefSeq" id="WP_001520581.1">
    <property type="nucleotide sequence ID" value="NC_003197.2"/>
</dbReference>
<dbReference type="SMR" id="Q56030"/>
<dbReference type="STRING" id="99287.STM1242"/>
<dbReference type="CAZy" id="CBM13">
    <property type="family name" value="Carbohydrate-Binding Module Family 13"/>
</dbReference>
<dbReference type="PaxDb" id="99287-STM1242"/>
<dbReference type="GeneID" id="1252760"/>
<dbReference type="KEGG" id="stm:STM1242"/>
<dbReference type="PATRIC" id="fig|99287.12.peg.1314"/>
<dbReference type="HOGENOM" id="CLU_126394_0_0_6"/>
<dbReference type="OMA" id="RIMQGEK"/>
<dbReference type="PhylomeDB" id="Q56030"/>
<dbReference type="BioCyc" id="SENT99287:STM1242-MONOMER"/>
<dbReference type="Proteomes" id="UP000001014">
    <property type="component" value="Chromosome"/>
</dbReference>
<dbReference type="GO" id="GO:0005886">
    <property type="term" value="C:plasma membrane"/>
    <property type="evidence" value="ECO:0007669"/>
    <property type="project" value="UniProtKB-SubCell"/>
</dbReference>
<dbReference type="Gene3D" id="2.80.10.50">
    <property type="match status" value="1"/>
</dbReference>
<dbReference type="InterPro" id="IPR035992">
    <property type="entry name" value="Ricin_B-like_lectins"/>
</dbReference>
<dbReference type="InterPro" id="IPR000772">
    <property type="entry name" value="Ricin_B_lectin"/>
</dbReference>
<dbReference type="Pfam" id="PF00652">
    <property type="entry name" value="Ricin_B_lectin"/>
    <property type="match status" value="1"/>
</dbReference>
<dbReference type="SMART" id="SM00458">
    <property type="entry name" value="RICIN"/>
    <property type="match status" value="1"/>
</dbReference>
<dbReference type="SUPFAM" id="SSF50370">
    <property type="entry name" value="Ricin B-like lectins"/>
    <property type="match status" value="1"/>
</dbReference>
<dbReference type="PROSITE" id="PS51257">
    <property type="entry name" value="PROKAR_LIPOPROTEIN"/>
    <property type="match status" value="1"/>
</dbReference>
<keyword id="KW-1003">Cell membrane</keyword>
<keyword id="KW-0449">Lipoprotein</keyword>
<keyword id="KW-0472">Membrane</keyword>
<keyword id="KW-0564">Palmitate</keyword>
<keyword id="KW-1185">Reference proteome</keyword>
<keyword id="KW-0732">Signal</keyword>
<feature type="signal peptide" evidence="1">
    <location>
        <begin position="1"/>
        <end position="20"/>
    </location>
</feature>
<feature type="chain" id="PRO_0000018171" description="Probable lipoprotein EnvE">
    <location>
        <begin position="21"/>
        <end position="173"/>
    </location>
</feature>
<feature type="lipid moiety-binding region" description="N-palmitoyl cysteine" evidence="1">
    <location>
        <position position="21"/>
    </location>
</feature>
<feature type="lipid moiety-binding region" description="S-diacylglycerol cysteine" evidence="1">
    <location>
        <position position="21"/>
    </location>
</feature>
<feature type="sequence conflict" description="In Ref. 1." evidence="2" ref="1">
    <original>D</original>
    <variation>H</variation>
    <location>
        <position position="132"/>
    </location>
</feature>
<comment type="subcellular location">
    <subcellularLocation>
        <location evidence="2">Cell membrane</location>
        <topology evidence="2">Lipid-anchor</topology>
    </subcellularLocation>
</comment>
<comment type="sequence caution" evidence="2">
    <conflict type="frameshift">
        <sequence resource="EMBL-CDS" id="AAA82995"/>
    </conflict>
</comment>
<name>ENVE_SALTY</name>
<accession>Q56030</accession>
<evidence type="ECO:0000255" key="1">
    <source>
        <dbReference type="PROSITE-ProRule" id="PRU00303"/>
    </source>
</evidence>
<evidence type="ECO:0000305" key="2"/>
<reference key="1">
    <citation type="journal article" date="1995" name="J. Bacteriol.">
        <title>Characterization of the Salmonella typhimurium pagC/pagD chromosomal region.</title>
        <authorList>
            <person name="Gunn J.S."/>
            <person name="Alpuche-Aranda C.M."/>
            <person name="Loomis W.P."/>
            <person name="Belden W.J."/>
            <person name="Miller S.I."/>
        </authorList>
    </citation>
    <scope>NUCLEOTIDE SEQUENCE [GENOMIC DNA]</scope>
    <source>
        <strain>ATCC 14028 / SGSG 2980 / CDC 6516-60 / NCTC 12023</strain>
    </source>
</reference>
<reference key="2">
    <citation type="journal article" date="2001" name="Nature">
        <title>Complete genome sequence of Salmonella enterica serovar Typhimurium LT2.</title>
        <authorList>
            <person name="McClelland M."/>
            <person name="Sanderson K.E."/>
            <person name="Spieth J."/>
            <person name="Clifton S.W."/>
            <person name="Latreille P."/>
            <person name="Courtney L."/>
            <person name="Porwollik S."/>
            <person name="Ali J."/>
            <person name="Dante M."/>
            <person name="Du F."/>
            <person name="Hou S."/>
            <person name="Layman D."/>
            <person name="Leonard S."/>
            <person name="Nguyen C."/>
            <person name="Scott K."/>
            <person name="Holmes A."/>
            <person name="Grewal N."/>
            <person name="Mulvaney E."/>
            <person name="Ryan E."/>
            <person name="Sun H."/>
            <person name="Florea L."/>
            <person name="Miller W."/>
            <person name="Stoneking T."/>
            <person name="Nhan M."/>
            <person name="Waterston R."/>
            <person name="Wilson R.K."/>
        </authorList>
    </citation>
    <scope>NUCLEOTIDE SEQUENCE [LARGE SCALE GENOMIC DNA]</scope>
    <source>
        <strain>LT2 / SGSC1412 / ATCC 700720</strain>
    </source>
</reference>